<accession>Q9V302</accession>
<sequence>MIDYQEVLSRYRPTQEEENRLRIISDDIIRKINSICRSRRLRAEAVIVGSYAKGTNLRDGDLDIFIAFDRDYPEEIINTEGLHIGHAVIPNGREKYAEHPYVSGEIGGVKIDVVPCYKMSFGDRKISAVDRTLLHTEYVNGHLDEKGRDEVRLLKIFTKSIGVYGAEARTFGFSGYLCELLVIRFRSFENVIRYFSKAKGRVLIDPDERFRDPMLLIDPVDP</sequence>
<name>CCA_THEAI</name>
<keyword id="KW-0067">ATP-binding</keyword>
<keyword id="KW-0460">Magnesium</keyword>
<keyword id="KW-0479">Metal-binding</keyword>
<keyword id="KW-0547">Nucleotide-binding</keyword>
<keyword id="KW-0548">Nucleotidyltransferase</keyword>
<keyword id="KW-0692">RNA repair</keyword>
<keyword id="KW-0694">RNA-binding</keyword>
<keyword id="KW-0808">Transferase</keyword>
<keyword id="KW-0819">tRNA processing</keyword>
<proteinExistence type="inferred from homology"/>
<gene>
    <name evidence="1" type="primary">cca</name>
</gene>
<dbReference type="EC" id="2.7.7.72" evidence="1"/>
<dbReference type="EMBL" id="AB023294">
    <property type="protein sequence ID" value="BAA82799.1"/>
    <property type="molecule type" value="Genomic_DNA"/>
</dbReference>
<dbReference type="PIR" id="T37335">
    <property type="entry name" value="T37335"/>
</dbReference>
<dbReference type="SMR" id="Q9V302"/>
<dbReference type="GO" id="GO:0005524">
    <property type="term" value="F:ATP binding"/>
    <property type="evidence" value="ECO:0007669"/>
    <property type="project" value="UniProtKB-KW"/>
</dbReference>
<dbReference type="GO" id="GO:0004810">
    <property type="term" value="F:CCA tRNA nucleotidyltransferase activity"/>
    <property type="evidence" value="ECO:0007669"/>
    <property type="project" value="UniProtKB-EC"/>
</dbReference>
<dbReference type="GO" id="GO:0046872">
    <property type="term" value="F:metal ion binding"/>
    <property type="evidence" value="ECO:0007669"/>
    <property type="project" value="UniProtKB-KW"/>
</dbReference>
<dbReference type="GO" id="GO:0003723">
    <property type="term" value="F:RNA binding"/>
    <property type="evidence" value="ECO:0007669"/>
    <property type="project" value="UniProtKB-KW"/>
</dbReference>
<dbReference type="GO" id="GO:0042245">
    <property type="term" value="P:RNA repair"/>
    <property type="evidence" value="ECO:0007669"/>
    <property type="project" value="UniProtKB-KW"/>
</dbReference>
<dbReference type="GO" id="GO:0001680">
    <property type="term" value="P:tRNA 3'-terminal CCA addition"/>
    <property type="evidence" value="ECO:0007669"/>
    <property type="project" value="InterPro"/>
</dbReference>
<dbReference type="CDD" id="cd05400">
    <property type="entry name" value="NT_2-5OAS_ClassI-CCAase"/>
    <property type="match status" value="1"/>
</dbReference>
<dbReference type="Gene3D" id="3.30.460.10">
    <property type="entry name" value="Beta Polymerase, domain 2"/>
    <property type="match status" value="1"/>
</dbReference>
<dbReference type="Gene3D" id="1.10.1410.30">
    <property type="entry name" value="CCA tRNA nucleotidyltransferase, domain 2"/>
    <property type="match status" value="1"/>
</dbReference>
<dbReference type="HAMAP" id="MF_01264">
    <property type="entry name" value="CCA_arch"/>
    <property type="match status" value="1"/>
</dbReference>
<dbReference type="InterPro" id="IPR008229">
    <property type="entry name" value="CCA-adding_arc"/>
</dbReference>
<dbReference type="InterPro" id="IPR042090">
    <property type="entry name" value="CCA_tRNA_nucleotrans_2"/>
</dbReference>
<dbReference type="InterPro" id="IPR006116">
    <property type="entry name" value="NT_2-5OAS_ClassI-CCAase"/>
</dbReference>
<dbReference type="InterPro" id="IPR043519">
    <property type="entry name" value="NT_sf"/>
</dbReference>
<dbReference type="InterPro" id="IPR002934">
    <property type="entry name" value="Polymerase_NTP_transf_dom"/>
</dbReference>
<dbReference type="InterPro" id="IPR015329">
    <property type="entry name" value="tRNA_NucTransf2"/>
</dbReference>
<dbReference type="NCBIfam" id="TIGR03671">
    <property type="entry name" value="cca_archaeal"/>
    <property type="match status" value="1"/>
</dbReference>
<dbReference type="PANTHER" id="PTHR39643">
    <property type="entry name" value="CCA-ADDING ENZYME"/>
    <property type="match status" value="1"/>
</dbReference>
<dbReference type="PANTHER" id="PTHR39643:SF1">
    <property type="entry name" value="CCA-ADDING ENZYME"/>
    <property type="match status" value="1"/>
</dbReference>
<dbReference type="Pfam" id="PF01909">
    <property type="entry name" value="NTP_transf_2"/>
    <property type="match status" value="1"/>
</dbReference>
<dbReference type="Pfam" id="PF09249">
    <property type="entry name" value="tRNA_NucTransf2"/>
    <property type="match status" value="1"/>
</dbReference>
<dbReference type="SUPFAM" id="SSF81301">
    <property type="entry name" value="Nucleotidyltransferase"/>
    <property type="match status" value="1"/>
</dbReference>
<dbReference type="SUPFAM" id="SSF81631">
    <property type="entry name" value="PAP/OAS1 substrate-binding domain"/>
    <property type="match status" value="1"/>
</dbReference>
<evidence type="ECO:0000255" key="1">
    <source>
        <dbReference type="HAMAP-Rule" id="MF_01264"/>
    </source>
</evidence>
<reference key="1">
    <citation type="journal article" date="1999" name="J. Biol. Chem.">
        <title>Structural conservation of the isolated zinc site in archaeal zinc-containing ferredoxins as revealed by X-ray absorption spectroscopic analysis and its evolutionary implications.</title>
        <authorList>
            <person name="Cosper N.J."/>
            <person name="Stalhandske C.M.V."/>
            <person name="Iwasaki H."/>
            <person name="Oshima T."/>
            <person name="Scott R.A."/>
            <person name="Iwasaki T."/>
        </authorList>
    </citation>
    <scope>NUCLEOTIDE SEQUENCE [GENOMIC DNA]</scope>
    <source>
        <strain>HO-62</strain>
    </source>
</reference>
<feature type="chain" id="PRO_0000139086" description="CCA-adding enzyme">
    <location>
        <begin position="1"/>
        <end position="222" status="greater than"/>
    </location>
</feature>
<feature type="binding site" evidence="1">
    <location>
        <position position="50"/>
    </location>
    <ligand>
        <name>ATP</name>
        <dbReference type="ChEBI" id="CHEBI:30616"/>
    </ligand>
</feature>
<feature type="binding site" evidence="1">
    <location>
        <position position="50"/>
    </location>
    <ligand>
        <name>CTP</name>
        <dbReference type="ChEBI" id="CHEBI:37563"/>
    </ligand>
</feature>
<feature type="binding site" evidence="1">
    <location>
        <position position="53"/>
    </location>
    <ligand>
        <name>ATP</name>
        <dbReference type="ChEBI" id="CHEBI:30616"/>
    </ligand>
</feature>
<feature type="binding site" evidence="1">
    <location>
        <position position="53"/>
    </location>
    <ligand>
        <name>CTP</name>
        <dbReference type="ChEBI" id="CHEBI:37563"/>
    </ligand>
</feature>
<feature type="binding site" evidence="1">
    <location>
        <position position="61"/>
    </location>
    <ligand>
        <name>Mg(2+)</name>
        <dbReference type="ChEBI" id="CHEBI:18420"/>
    </ligand>
</feature>
<feature type="binding site" evidence="1">
    <location>
        <position position="63"/>
    </location>
    <ligand>
        <name>Mg(2+)</name>
        <dbReference type="ChEBI" id="CHEBI:18420"/>
    </ligand>
</feature>
<feature type="binding site" evidence="1">
    <location>
        <position position="112"/>
    </location>
    <ligand>
        <name>Mg(2+)</name>
        <dbReference type="ChEBI" id="CHEBI:18420"/>
    </ligand>
</feature>
<feature type="binding site" evidence="1">
    <location>
        <position position="135"/>
    </location>
    <ligand>
        <name>ATP</name>
        <dbReference type="ChEBI" id="CHEBI:30616"/>
    </ligand>
</feature>
<feature type="binding site" evidence="1">
    <location>
        <position position="135"/>
    </location>
    <ligand>
        <name>CTP</name>
        <dbReference type="ChEBI" id="CHEBI:37563"/>
    </ligand>
</feature>
<feature type="binding site" evidence="1">
    <location>
        <position position="155"/>
    </location>
    <ligand>
        <name>ATP</name>
        <dbReference type="ChEBI" id="CHEBI:30616"/>
    </ligand>
</feature>
<feature type="binding site" evidence="1">
    <location>
        <position position="155"/>
    </location>
    <ligand>
        <name>CTP</name>
        <dbReference type="ChEBI" id="CHEBI:37563"/>
    </ligand>
</feature>
<feature type="binding site" evidence="1">
    <location>
        <position position="164"/>
    </location>
    <ligand>
        <name>ATP</name>
        <dbReference type="ChEBI" id="CHEBI:30616"/>
    </ligand>
</feature>
<feature type="binding site" evidence="1">
    <location>
        <position position="164"/>
    </location>
    <ligand>
        <name>CTP</name>
        <dbReference type="ChEBI" id="CHEBI:37563"/>
    </ligand>
</feature>
<feature type="non-terminal residue">
    <location>
        <position position="222"/>
    </location>
</feature>
<organism>
    <name type="scientific">Thermoplasma acidophilum</name>
    <dbReference type="NCBI Taxonomy" id="2303"/>
    <lineage>
        <taxon>Archaea</taxon>
        <taxon>Methanobacteriati</taxon>
        <taxon>Thermoplasmatota</taxon>
        <taxon>Thermoplasmata</taxon>
        <taxon>Thermoplasmatales</taxon>
        <taxon>Thermoplasmataceae</taxon>
        <taxon>Thermoplasma</taxon>
    </lineage>
</organism>
<protein>
    <recommendedName>
        <fullName evidence="1">CCA-adding enzyme</fullName>
        <ecNumber evidence="1">2.7.7.72</ecNumber>
    </recommendedName>
    <alternativeName>
        <fullName evidence="1">CCA tRNA nucleotidyltransferase</fullName>
    </alternativeName>
    <alternativeName>
        <fullName evidence="1">tRNA CCA-pyrophosphorylase</fullName>
    </alternativeName>
    <alternativeName>
        <fullName evidence="1">tRNA adenylyl-/cytidylyl- transferase</fullName>
    </alternativeName>
    <alternativeName>
        <fullName evidence="1">tRNA nucleotidyltransferase</fullName>
    </alternativeName>
    <alternativeName>
        <fullName evidence="1">tRNA-NT</fullName>
    </alternativeName>
</protein>
<comment type="function">
    <text evidence="1">Catalyzes the addition and repair of the essential 3'-terminal CCA sequence in tRNAs without using a nucleic acid template. Adds these three nucleotides in the order of C, C, and A to the tRNA nucleotide-73, using CTP and ATP as substrates and producing inorganic pyrophosphate. tRNA 3'-terminal CCA addition is required both for tRNA processing and repair. Also involved in tRNA surveillance by mediating tandem CCA addition to generate a CCACCA at the 3' terminus of unstable tRNAs. While stable tRNAs receive only 3'-terminal CCA, unstable tRNAs are marked with CCACCA and rapidly degraded.</text>
</comment>
<comment type="catalytic activity">
    <reaction evidence="1">
        <text>a tRNA precursor + 2 CTP + ATP = a tRNA with a 3' CCA end + 3 diphosphate</text>
        <dbReference type="Rhea" id="RHEA:14433"/>
        <dbReference type="Rhea" id="RHEA-COMP:10465"/>
        <dbReference type="Rhea" id="RHEA-COMP:10468"/>
        <dbReference type="ChEBI" id="CHEBI:30616"/>
        <dbReference type="ChEBI" id="CHEBI:33019"/>
        <dbReference type="ChEBI" id="CHEBI:37563"/>
        <dbReference type="ChEBI" id="CHEBI:74896"/>
        <dbReference type="ChEBI" id="CHEBI:83071"/>
        <dbReference type="EC" id="2.7.7.72"/>
    </reaction>
</comment>
<comment type="catalytic activity">
    <reaction evidence="1">
        <text>a tRNA with a 3' CCA end + 2 CTP + ATP = a tRNA with a 3' CCACCA end + 3 diphosphate</text>
        <dbReference type="Rhea" id="RHEA:76235"/>
        <dbReference type="Rhea" id="RHEA-COMP:10468"/>
        <dbReference type="Rhea" id="RHEA-COMP:18655"/>
        <dbReference type="ChEBI" id="CHEBI:30616"/>
        <dbReference type="ChEBI" id="CHEBI:33019"/>
        <dbReference type="ChEBI" id="CHEBI:37563"/>
        <dbReference type="ChEBI" id="CHEBI:83071"/>
        <dbReference type="ChEBI" id="CHEBI:195187"/>
    </reaction>
    <physiologicalReaction direction="left-to-right" evidence="1">
        <dbReference type="Rhea" id="RHEA:76236"/>
    </physiologicalReaction>
</comment>
<comment type="cofactor">
    <cofactor evidence="1">
        <name>Mg(2+)</name>
        <dbReference type="ChEBI" id="CHEBI:18420"/>
    </cofactor>
</comment>
<comment type="subunit">
    <text evidence="1">Homodimer.</text>
</comment>
<comment type="miscellaneous">
    <text evidence="1">A single active site specifically recognizes both ATP and CTP and is responsible for their addition.</text>
</comment>
<comment type="similarity">
    <text evidence="1">Belongs to the tRNA nucleotidyltransferase/poly(A) polymerase family. Archaeal CCA-adding enzyme subfamily.</text>
</comment>